<feature type="peptide" id="PRO_0000044464" description="Alpha-conotoxin EIVA" evidence="2">
    <location>
        <begin position="1"/>
        <end position="30"/>
    </location>
</feature>
<feature type="modified residue" description="4-hydroxyproline" evidence="2">
    <location>
        <position position="7"/>
    </location>
</feature>
<feature type="modified residue" description="4-hydroxyproline" evidence="2">
    <location>
        <position position="13"/>
    </location>
</feature>
<feature type="modified residue" description="4-hydroxyproline" evidence="2">
    <location>
        <position position="21"/>
    </location>
</feature>
<feature type="modified residue" description="4-hydroxyproline" evidence="2">
    <location>
        <position position="22"/>
    </location>
</feature>
<feature type="modified residue" description="4-hydroxyproline" evidence="2">
    <location>
        <position position="27"/>
    </location>
</feature>
<feature type="modified residue" description="Glycine amide" evidence="2">
    <location>
        <position position="30"/>
    </location>
</feature>
<feature type="disulfide bond" evidence="1 5">
    <location>
        <begin position="2"/>
        <end position="16"/>
    </location>
</feature>
<feature type="disulfide bond" evidence="1 5">
    <location>
        <begin position="3"/>
        <end position="11"/>
    </location>
</feature>
<feature type="disulfide bond" evidence="1 5">
    <location>
        <begin position="14"/>
        <end position="24"/>
    </location>
</feature>
<feature type="strand" evidence="6">
    <location>
        <begin position="5"/>
        <end position="10"/>
    </location>
</feature>
<feature type="strand" evidence="6">
    <location>
        <begin position="16"/>
        <end position="19"/>
    </location>
</feature>
<feature type="helix" evidence="6">
    <location>
        <begin position="22"/>
        <end position="25"/>
    </location>
</feature>
<accession>P58782</accession>
<proteinExistence type="evidence at protein level"/>
<name>CA4A_CONER</name>
<comment type="function">
    <text evidence="2">Alpha-conotoxins act on postsynaptic membranes, they bind to the nicotinic acetylcholine receptors (nAChR) and thus inhibit them. This toxin binds with high affinity to both fetal (alpha-1-beta-1-epsilon-delta (CHRNA1-CHRNB1-CHRND-CHRNE) subunits) and adult (alpha-1/beta-1/gamma/delta subunits) mammalian muscle nicotinic acetylcholine receptors (nAChR).</text>
</comment>
<comment type="subcellular location">
    <subcellularLocation>
        <location evidence="2">Secreted</location>
    </subcellularLocation>
</comment>
<comment type="tissue specificity">
    <text evidence="4">Expressed by the venom duct.</text>
</comment>
<comment type="domain">
    <text evidence="3">The cysteine framework is IV (CC-C-C-C-C).</text>
</comment>
<comment type="mass spectrometry" mass="3095.2" method="Electrospray" evidence="2"/>
<comment type="similarity">
    <text evidence="3">Belongs to the conotoxin A superfamily.</text>
</comment>
<organism>
    <name type="scientific">Conus ermineus</name>
    <name type="common">Agate cone</name>
    <name type="synonym">Chelyconus ermineus</name>
    <dbReference type="NCBI Taxonomy" id="55423"/>
    <lineage>
        <taxon>Eukaryota</taxon>
        <taxon>Metazoa</taxon>
        <taxon>Spiralia</taxon>
        <taxon>Lophotrochozoa</taxon>
        <taxon>Mollusca</taxon>
        <taxon>Gastropoda</taxon>
        <taxon>Caenogastropoda</taxon>
        <taxon>Neogastropoda</taxon>
        <taxon>Conoidea</taxon>
        <taxon>Conidae</taxon>
        <taxon>Conus</taxon>
        <taxon>Chelyconus</taxon>
    </lineage>
</organism>
<sequence length="30" mass="3023">GCCGPYPNAACHPCGCKVGRPPYCDRPSGG</sequence>
<protein>
    <recommendedName>
        <fullName>Alpha-conotoxin EIVA</fullName>
    </recommendedName>
</protein>
<keyword id="KW-0002">3D-structure</keyword>
<keyword id="KW-0008">Acetylcholine receptor inhibiting toxin</keyword>
<keyword id="KW-0027">Amidation</keyword>
<keyword id="KW-0903">Direct protein sequencing</keyword>
<keyword id="KW-1015">Disulfide bond</keyword>
<keyword id="KW-0379">Hydroxylation</keyword>
<keyword id="KW-0872">Ion channel impairing toxin</keyword>
<keyword id="KW-0528">Neurotoxin</keyword>
<keyword id="KW-0629">Postsynaptic neurotoxin</keyword>
<keyword id="KW-0964">Secreted</keyword>
<keyword id="KW-0800">Toxin</keyword>
<evidence type="ECO:0000269" key="1">
    <source>
    </source>
</evidence>
<evidence type="ECO:0000269" key="2">
    <source>
    </source>
</evidence>
<evidence type="ECO:0000305" key="3"/>
<evidence type="ECO:0000305" key="4">
    <source>
    </source>
</evidence>
<evidence type="ECO:0007744" key="5">
    <source>
        <dbReference type="PDB" id="1PQR"/>
    </source>
</evidence>
<evidence type="ECO:0007829" key="6">
    <source>
        <dbReference type="PDB" id="1PQR"/>
    </source>
</evidence>
<dbReference type="PDB" id="1PQR">
    <property type="method" value="NMR"/>
    <property type="chains" value="A=1-30"/>
</dbReference>
<dbReference type="PDBsum" id="1PQR"/>
<dbReference type="SMR" id="P58782"/>
<dbReference type="ConoServer" id="1635">
    <property type="toxin name" value="EIVA"/>
</dbReference>
<dbReference type="EvolutionaryTrace" id="P58782"/>
<dbReference type="GO" id="GO:0005576">
    <property type="term" value="C:extracellular region"/>
    <property type="evidence" value="ECO:0007669"/>
    <property type="project" value="UniProtKB-SubCell"/>
</dbReference>
<dbReference type="GO" id="GO:0035792">
    <property type="term" value="C:host cell postsynaptic membrane"/>
    <property type="evidence" value="ECO:0007669"/>
    <property type="project" value="UniProtKB-KW"/>
</dbReference>
<dbReference type="GO" id="GO:0030550">
    <property type="term" value="F:acetylcholine receptor inhibitor activity"/>
    <property type="evidence" value="ECO:0007669"/>
    <property type="project" value="UniProtKB-KW"/>
</dbReference>
<dbReference type="GO" id="GO:0099106">
    <property type="term" value="F:ion channel regulator activity"/>
    <property type="evidence" value="ECO:0007669"/>
    <property type="project" value="UniProtKB-KW"/>
</dbReference>
<dbReference type="GO" id="GO:0090729">
    <property type="term" value="F:toxin activity"/>
    <property type="evidence" value="ECO:0007669"/>
    <property type="project" value="UniProtKB-KW"/>
</dbReference>
<dbReference type="InterPro" id="IPR012498">
    <property type="entry name" value="Toxin_14"/>
</dbReference>
<dbReference type="Pfam" id="PF07829">
    <property type="entry name" value="Toxin_14"/>
    <property type="match status" value="1"/>
</dbReference>
<reference key="1">
    <citation type="journal article" date="1997" name="J. Biol. Chem.">
        <title>Differential targeting of nicotinic acetylcholine receptors by novel alphaA-conotoxins.</title>
        <authorList>
            <person name="Jacobsen R.B."/>
            <person name="Yoshikami D."/>
            <person name="Ellison M."/>
            <person name="Martinez J."/>
            <person name="Gray W.R."/>
            <person name="Cartier G.E."/>
            <person name="Shon K.-J."/>
            <person name="Groebe D.R."/>
            <person name="Abramson S.N."/>
            <person name="Olivera B.M."/>
            <person name="McIntosh J.M."/>
        </authorList>
    </citation>
    <scope>PROTEIN SEQUENCE</scope>
    <scope>SYNTHESIS</scope>
    <scope>MASS SPECTROMETRY</scope>
    <scope>HYDROXYLATION AT PRO-7; PRO-13; PRO-21; PRO-22 AND PRO-27</scope>
    <scope>AMIDATION AT GLY-30</scope>
    <scope>SUBCELLULAR LOCATION</scope>
    <source>
        <tissue>Venom</tissue>
    </source>
</reference>
<reference key="2">
    <citation type="journal article" date="2003" name="J. Biol. Chem.">
        <title>Solution conformation of alphaA-conotoxin EIVA, a potent neuromuscular nicotinic acetylcholine receptor antagonist from Conus ermineus.</title>
        <authorList>
            <person name="Chi S.-W."/>
            <person name="Park K.-H."/>
            <person name="Suk J.-E."/>
            <person name="Olivera B.M."/>
            <person name="McIntosh J.M."/>
            <person name="Han K.-H."/>
        </authorList>
    </citation>
    <scope>STRUCTURE BY NMR</scope>
    <scope>DISULFIDE BONDS</scope>
</reference>